<dbReference type="EMBL" id="CP000514">
    <property type="protein sequence ID" value="ABM19793.1"/>
    <property type="molecule type" value="Genomic_DNA"/>
</dbReference>
<dbReference type="RefSeq" id="WP_011786163.1">
    <property type="nucleotide sequence ID" value="NC_008740.1"/>
</dbReference>
<dbReference type="SMR" id="A1U474"/>
<dbReference type="STRING" id="351348.Maqu_2718"/>
<dbReference type="KEGG" id="maq:Maqu_2718"/>
<dbReference type="eggNOG" id="COG1660">
    <property type="taxonomic scope" value="Bacteria"/>
</dbReference>
<dbReference type="HOGENOM" id="CLU_059558_1_1_6"/>
<dbReference type="OrthoDB" id="9784461at2"/>
<dbReference type="Proteomes" id="UP000000998">
    <property type="component" value="Chromosome"/>
</dbReference>
<dbReference type="GO" id="GO:0005524">
    <property type="term" value="F:ATP binding"/>
    <property type="evidence" value="ECO:0007669"/>
    <property type="project" value="UniProtKB-UniRule"/>
</dbReference>
<dbReference type="GO" id="GO:0005525">
    <property type="term" value="F:GTP binding"/>
    <property type="evidence" value="ECO:0007669"/>
    <property type="project" value="UniProtKB-UniRule"/>
</dbReference>
<dbReference type="Gene3D" id="3.40.50.300">
    <property type="entry name" value="P-loop containing nucleotide triphosphate hydrolases"/>
    <property type="match status" value="1"/>
</dbReference>
<dbReference type="HAMAP" id="MF_00636">
    <property type="entry name" value="RapZ_like"/>
    <property type="match status" value="1"/>
</dbReference>
<dbReference type="InterPro" id="IPR027417">
    <property type="entry name" value="P-loop_NTPase"/>
</dbReference>
<dbReference type="InterPro" id="IPR005337">
    <property type="entry name" value="RapZ-like"/>
</dbReference>
<dbReference type="InterPro" id="IPR053930">
    <property type="entry name" value="RapZ-like_N"/>
</dbReference>
<dbReference type="InterPro" id="IPR053931">
    <property type="entry name" value="RapZ_C"/>
</dbReference>
<dbReference type="NCBIfam" id="NF003828">
    <property type="entry name" value="PRK05416.1"/>
    <property type="match status" value="1"/>
</dbReference>
<dbReference type="PANTHER" id="PTHR30448">
    <property type="entry name" value="RNASE ADAPTER PROTEIN RAPZ"/>
    <property type="match status" value="1"/>
</dbReference>
<dbReference type="PANTHER" id="PTHR30448:SF0">
    <property type="entry name" value="RNASE ADAPTER PROTEIN RAPZ"/>
    <property type="match status" value="1"/>
</dbReference>
<dbReference type="Pfam" id="PF22740">
    <property type="entry name" value="PapZ_C"/>
    <property type="match status" value="1"/>
</dbReference>
<dbReference type="Pfam" id="PF03668">
    <property type="entry name" value="RapZ-like_N"/>
    <property type="match status" value="1"/>
</dbReference>
<dbReference type="PIRSF" id="PIRSF005052">
    <property type="entry name" value="P-loopkin"/>
    <property type="match status" value="1"/>
</dbReference>
<dbReference type="SUPFAM" id="SSF52540">
    <property type="entry name" value="P-loop containing nucleoside triphosphate hydrolases"/>
    <property type="match status" value="1"/>
</dbReference>
<evidence type="ECO:0000255" key="1">
    <source>
        <dbReference type="HAMAP-Rule" id="MF_00636"/>
    </source>
</evidence>
<sequence>MKLIIVSGRSGSGKSTALHVLEDLGFYCIDNLPIGLLFPLTREAATQEAPGRLKKMAVSIDARNLSAELANFETIYQQLKQTGVELEIIFLDADEQSLLQRFHATRRKHPLSDDKTSLREAITNEKQLLEPLSKLADLYVNTTGLSMYELRDMIKQRVAGRKDQELALLFQSFGFKHGVPVDSDYVFDVRCLPNPYWDTSLRKHTGVDQPVIDFLEREPLTRQMVDDLTGFLNTWLPSFADSNRSYMTISIGCTGGQHRSVYVCEQLGRYFRDNYRNVQVRHTELPHLQARGEI</sequence>
<protein>
    <recommendedName>
        <fullName evidence="1">Nucleotide-binding protein Maqu_2718</fullName>
    </recommendedName>
</protein>
<accession>A1U474</accession>
<organism>
    <name type="scientific">Marinobacter nauticus (strain ATCC 700491 / DSM 11845 / VT8)</name>
    <name type="common">Marinobacter aquaeolei</name>
    <dbReference type="NCBI Taxonomy" id="351348"/>
    <lineage>
        <taxon>Bacteria</taxon>
        <taxon>Pseudomonadati</taxon>
        <taxon>Pseudomonadota</taxon>
        <taxon>Gammaproteobacteria</taxon>
        <taxon>Pseudomonadales</taxon>
        <taxon>Marinobacteraceae</taxon>
        <taxon>Marinobacter</taxon>
    </lineage>
</organism>
<feature type="chain" id="PRO_1000056835" description="Nucleotide-binding protein Maqu_2718">
    <location>
        <begin position="1"/>
        <end position="294"/>
    </location>
</feature>
<feature type="binding site" evidence="1">
    <location>
        <begin position="8"/>
        <end position="15"/>
    </location>
    <ligand>
        <name>ATP</name>
        <dbReference type="ChEBI" id="CHEBI:30616"/>
    </ligand>
</feature>
<feature type="binding site" evidence="1">
    <location>
        <begin position="61"/>
        <end position="64"/>
    </location>
    <ligand>
        <name>GTP</name>
        <dbReference type="ChEBI" id="CHEBI:37565"/>
    </ligand>
</feature>
<gene>
    <name type="ordered locus">Maqu_2718</name>
</gene>
<proteinExistence type="inferred from homology"/>
<keyword id="KW-0067">ATP-binding</keyword>
<keyword id="KW-0342">GTP-binding</keyword>
<keyword id="KW-0547">Nucleotide-binding</keyword>
<name>Y2718_MARN8</name>
<comment type="function">
    <text evidence="1">Displays ATPase and GTPase activities.</text>
</comment>
<comment type="similarity">
    <text evidence="1">Belongs to the RapZ-like family.</text>
</comment>
<reference key="1">
    <citation type="journal article" date="2011" name="Appl. Environ. Microbiol.">
        <title>Genomic potential of Marinobacter aquaeolei, a biogeochemical 'opportunitroph'.</title>
        <authorList>
            <person name="Singer E."/>
            <person name="Webb E.A."/>
            <person name="Nelson W.C."/>
            <person name="Heidelberg J.F."/>
            <person name="Ivanova N."/>
            <person name="Pati A."/>
            <person name="Edwards K.J."/>
        </authorList>
    </citation>
    <scope>NUCLEOTIDE SEQUENCE [LARGE SCALE GENOMIC DNA]</scope>
    <source>
        <strain>ATCC 700491 / DSM 11845 / VT8</strain>
    </source>
</reference>